<evidence type="ECO:0000255" key="1">
    <source>
        <dbReference type="HAMAP-Rule" id="MF_00500"/>
    </source>
</evidence>
<evidence type="ECO:0000256" key="2">
    <source>
        <dbReference type="SAM" id="MobiDB-lite"/>
    </source>
</evidence>
<evidence type="ECO:0000305" key="3"/>
<name>RS20_SHESW</name>
<keyword id="KW-0687">Ribonucleoprotein</keyword>
<keyword id="KW-0689">Ribosomal protein</keyword>
<keyword id="KW-0694">RNA-binding</keyword>
<keyword id="KW-0699">rRNA-binding</keyword>
<proteinExistence type="inferred from homology"/>
<organism>
    <name type="scientific">Shewanella sp. (strain W3-18-1)</name>
    <dbReference type="NCBI Taxonomy" id="351745"/>
    <lineage>
        <taxon>Bacteria</taxon>
        <taxon>Pseudomonadati</taxon>
        <taxon>Pseudomonadota</taxon>
        <taxon>Gammaproteobacteria</taxon>
        <taxon>Alteromonadales</taxon>
        <taxon>Shewanellaceae</taxon>
        <taxon>Shewanella</taxon>
    </lineage>
</organism>
<gene>
    <name evidence="1" type="primary">rpsT</name>
    <name type="ordered locus">Sputw3181_3109</name>
</gene>
<accession>A1RMM9</accession>
<dbReference type="EMBL" id="CP000503">
    <property type="protein sequence ID" value="ABM25924.1"/>
    <property type="molecule type" value="Genomic_DNA"/>
</dbReference>
<dbReference type="RefSeq" id="WP_011790375.1">
    <property type="nucleotide sequence ID" value="NC_008750.1"/>
</dbReference>
<dbReference type="SMR" id="A1RMM9"/>
<dbReference type="GeneID" id="67442571"/>
<dbReference type="KEGG" id="shw:Sputw3181_3109"/>
<dbReference type="HOGENOM" id="CLU_160655_4_0_6"/>
<dbReference type="Proteomes" id="UP000002597">
    <property type="component" value="Chromosome"/>
</dbReference>
<dbReference type="GO" id="GO:0005829">
    <property type="term" value="C:cytosol"/>
    <property type="evidence" value="ECO:0007669"/>
    <property type="project" value="TreeGrafter"/>
</dbReference>
<dbReference type="GO" id="GO:0015935">
    <property type="term" value="C:small ribosomal subunit"/>
    <property type="evidence" value="ECO:0007669"/>
    <property type="project" value="TreeGrafter"/>
</dbReference>
<dbReference type="GO" id="GO:0070181">
    <property type="term" value="F:small ribosomal subunit rRNA binding"/>
    <property type="evidence" value="ECO:0007669"/>
    <property type="project" value="TreeGrafter"/>
</dbReference>
<dbReference type="GO" id="GO:0003735">
    <property type="term" value="F:structural constituent of ribosome"/>
    <property type="evidence" value="ECO:0007669"/>
    <property type="project" value="InterPro"/>
</dbReference>
<dbReference type="GO" id="GO:0006412">
    <property type="term" value="P:translation"/>
    <property type="evidence" value="ECO:0007669"/>
    <property type="project" value="UniProtKB-UniRule"/>
</dbReference>
<dbReference type="FunFam" id="1.20.58.110:FF:000001">
    <property type="entry name" value="30S ribosomal protein S20"/>
    <property type="match status" value="1"/>
</dbReference>
<dbReference type="Gene3D" id="1.20.58.110">
    <property type="entry name" value="Ribosomal protein S20"/>
    <property type="match status" value="1"/>
</dbReference>
<dbReference type="HAMAP" id="MF_00500">
    <property type="entry name" value="Ribosomal_bS20"/>
    <property type="match status" value="1"/>
</dbReference>
<dbReference type="InterPro" id="IPR002583">
    <property type="entry name" value="Ribosomal_bS20"/>
</dbReference>
<dbReference type="InterPro" id="IPR036510">
    <property type="entry name" value="Ribosomal_bS20_sf"/>
</dbReference>
<dbReference type="NCBIfam" id="TIGR00029">
    <property type="entry name" value="S20"/>
    <property type="match status" value="1"/>
</dbReference>
<dbReference type="PANTHER" id="PTHR33398">
    <property type="entry name" value="30S RIBOSOMAL PROTEIN S20"/>
    <property type="match status" value="1"/>
</dbReference>
<dbReference type="PANTHER" id="PTHR33398:SF1">
    <property type="entry name" value="SMALL RIBOSOMAL SUBUNIT PROTEIN BS20C"/>
    <property type="match status" value="1"/>
</dbReference>
<dbReference type="Pfam" id="PF01649">
    <property type="entry name" value="Ribosomal_S20p"/>
    <property type="match status" value="1"/>
</dbReference>
<dbReference type="SUPFAM" id="SSF46992">
    <property type="entry name" value="Ribosomal protein S20"/>
    <property type="match status" value="1"/>
</dbReference>
<reference key="1">
    <citation type="submission" date="2006-12" db="EMBL/GenBank/DDBJ databases">
        <title>Complete sequence of Shewanella sp. W3-18-1.</title>
        <authorList>
            <consortium name="US DOE Joint Genome Institute"/>
            <person name="Copeland A."/>
            <person name="Lucas S."/>
            <person name="Lapidus A."/>
            <person name="Barry K."/>
            <person name="Detter J.C."/>
            <person name="Glavina del Rio T."/>
            <person name="Hammon N."/>
            <person name="Israni S."/>
            <person name="Dalin E."/>
            <person name="Tice H."/>
            <person name="Pitluck S."/>
            <person name="Chain P."/>
            <person name="Malfatti S."/>
            <person name="Shin M."/>
            <person name="Vergez L."/>
            <person name="Schmutz J."/>
            <person name="Larimer F."/>
            <person name="Land M."/>
            <person name="Hauser L."/>
            <person name="Kyrpides N."/>
            <person name="Lykidis A."/>
            <person name="Tiedje J."/>
            <person name="Richardson P."/>
        </authorList>
    </citation>
    <scope>NUCLEOTIDE SEQUENCE [LARGE SCALE GENOMIC DNA]</scope>
    <source>
        <strain>W3-18-1</strain>
    </source>
</reference>
<feature type="chain" id="PRO_1000014657" description="Small ribosomal subunit protein bS20">
    <location>
        <begin position="1"/>
        <end position="88"/>
    </location>
</feature>
<feature type="region of interest" description="Disordered" evidence="2">
    <location>
        <begin position="1"/>
        <end position="27"/>
    </location>
</feature>
<protein>
    <recommendedName>
        <fullName evidence="1">Small ribosomal subunit protein bS20</fullName>
    </recommendedName>
    <alternativeName>
        <fullName evidence="3">30S ribosomal protein S20</fullName>
    </alternativeName>
</protein>
<sequence>MANSKSAKKRALQSEKRRQHNASRRSMLRTYVKKVIAAIKAGDHKTATEAFAVAQPIVDRMATKGLIHKNKAARQKARLNAKIKAIAA</sequence>
<comment type="function">
    <text evidence="1">Binds directly to 16S ribosomal RNA.</text>
</comment>
<comment type="similarity">
    <text evidence="1">Belongs to the bacterial ribosomal protein bS20 family.</text>
</comment>